<organism>
    <name type="scientific">Salmonella newport (strain SL254)</name>
    <dbReference type="NCBI Taxonomy" id="423368"/>
    <lineage>
        <taxon>Bacteria</taxon>
        <taxon>Pseudomonadati</taxon>
        <taxon>Pseudomonadota</taxon>
        <taxon>Gammaproteobacteria</taxon>
        <taxon>Enterobacterales</taxon>
        <taxon>Enterobacteriaceae</taxon>
        <taxon>Salmonella</taxon>
    </lineage>
</organism>
<reference key="1">
    <citation type="journal article" date="2011" name="J. Bacteriol.">
        <title>Comparative genomics of 28 Salmonella enterica isolates: evidence for CRISPR-mediated adaptive sublineage evolution.</title>
        <authorList>
            <person name="Fricke W.F."/>
            <person name="Mammel M.K."/>
            <person name="McDermott P.F."/>
            <person name="Tartera C."/>
            <person name="White D.G."/>
            <person name="Leclerc J.E."/>
            <person name="Ravel J."/>
            <person name="Cebula T.A."/>
        </authorList>
    </citation>
    <scope>NUCLEOTIDE SEQUENCE [LARGE SCALE GENOMIC DNA]</scope>
    <source>
        <strain>SL254</strain>
    </source>
</reference>
<name>RUVC_SALNS</name>
<protein>
    <recommendedName>
        <fullName evidence="1">Crossover junction endodeoxyribonuclease RuvC</fullName>
        <ecNumber evidence="1">3.1.21.10</ecNumber>
    </recommendedName>
    <alternativeName>
        <fullName evidence="1">Holliday junction nuclease RuvC</fullName>
    </alternativeName>
    <alternativeName>
        <fullName evidence="1">Holliday junction resolvase RuvC</fullName>
    </alternativeName>
</protein>
<feature type="chain" id="PRO_1000090560" description="Crossover junction endodeoxyribonuclease RuvC">
    <location>
        <begin position="1"/>
        <end position="173"/>
    </location>
</feature>
<feature type="active site" evidence="1">
    <location>
        <position position="8"/>
    </location>
</feature>
<feature type="active site" evidence="1">
    <location>
        <position position="67"/>
    </location>
</feature>
<feature type="active site" evidence="1">
    <location>
        <position position="139"/>
    </location>
</feature>
<feature type="binding site" evidence="1">
    <location>
        <position position="8"/>
    </location>
    <ligand>
        <name>Mg(2+)</name>
        <dbReference type="ChEBI" id="CHEBI:18420"/>
        <label>1</label>
    </ligand>
</feature>
<feature type="binding site" evidence="1">
    <location>
        <position position="67"/>
    </location>
    <ligand>
        <name>Mg(2+)</name>
        <dbReference type="ChEBI" id="CHEBI:18420"/>
        <label>2</label>
    </ligand>
</feature>
<feature type="binding site" evidence="1">
    <location>
        <position position="139"/>
    </location>
    <ligand>
        <name>Mg(2+)</name>
        <dbReference type="ChEBI" id="CHEBI:18420"/>
        <label>1</label>
    </ligand>
</feature>
<dbReference type="EC" id="3.1.21.10" evidence="1"/>
<dbReference type="EMBL" id="CP001113">
    <property type="protein sequence ID" value="ACF63757.1"/>
    <property type="molecule type" value="Genomic_DNA"/>
</dbReference>
<dbReference type="RefSeq" id="WP_000022509.1">
    <property type="nucleotide sequence ID" value="NZ_CCMR01000003.1"/>
</dbReference>
<dbReference type="SMR" id="B4SVE8"/>
<dbReference type="GeneID" id="93033412"/>
<dbReference type="KEGG" id="see:SNSL254_A2057"/>
<dbReference type="HOGENOM" id="CLU_091257_2_1_6"/>
<dbReference type="Proteomes" id="UP000008824">
    <property type="component" value="Chromosome"/>
</dbReference>
<dbReference type="GO" id="GO:0005737">
    <property type="term" value="C:cytoplasm"/>
    <property type="evidence" value="ECO:0007669"/>
    <property type="project" value="UniProtKB-SubCell"/>
</dbReference>
<dbReference type="GO" id="GO:0048476">
    <property type="term" value="C:Holliday junction resolvase complex"/>
    <property type="evidence" value="ECO:0007669"/>
    <property type="project" value="UniProtKB-UniRule"/>
</dbReference>
<dbReference type="GO" id="GO:0008821">
    <property type="term" value="F:crossover junction DNA endonuclease activity"/>
    <property type="evidence" value="ECO:0007669"/>
    <property type="project" value="UniProtKB-UniRule"/>
</dbReference>
<dbReference type="GO" id="GO:0003677">
    <property type="term" value="F:DNA binding"/>
    <property type="evidence" value="ECO:0007669"/>
    <property type="project" value="UniProtKB-KW"/>
</dbReference>
<dbReference type="GO" id="GO:0000287">
    <property type="term" value="F:magnesium ion binding"/>
    <property type="evidence" value="ECO:0007669"/>
    <property type="project" value="UniProtKB-UniRule"/>
</dbReference>
<dbReference type="GO" id="GO:0006310">
    <property type="term" value="P:DNA recombination"/>
    <property type="evidence" value="ECO:0007669"/>
    <property type="project" value="UniProtKB-UniRule"/>
</dbReference>
<dbReference type="GO" id="GO:0006281">
    <property type="term" value="P:DNA repair"/>
    <property type="evidence" value="ECO:0007669"/>
    <property type="project" value="UniProtKB-UniRule"/>
</dbReference>
<dbReference type="CDD" id="cd16962">
    <property type="entry name" value="RuvC"/>
    <property type="match status" value="1"/>
</dbReference>
<dbReference type="FunFam" id="3.30.420.10:FF:000002">
    <property type="entry name" value="Crossover junction endodeoxyribonuclease RuvC"/>
    <property type="match status" value="1"/>
</dbReference>
<dbReference type="Gene3D" id="3.30.420.10">
    <property type="entry name" value="Ribonuclease H-like superfamily/Ribonuclease H"/>
    <property type="match status" value="1"/>
</dbReference>
<dbReference type="HAMAP" id="MF_00034">
    <property type="entry name" value="RuvC"/>
    <property type="match status" value="1"/>
</dbReference>
<dbReference type="InterPro" id="IPR012337">
    <property type="entry name" value="RNaseH-like_sf"/>
</dbReference>
<dbReference type="InterPro" id="IPR036397">
    <property type="entry name" value="RNaseH_sf"/>
</dbReference>
<dbReference type="InterPro" id="IPR020563">
    <property type="entry name" value="X-over_junc_endoDNase_Mg_BS"/>
</dbReference>
<dbReference type="InterPro" id="IPR002176">
    <property type="entry name" value="X-over_junc_endoDNase_RuvC"/>
</dbReference>
<dbReference type="NCBIfam" id="NF000711">
    <property type="entry name" value="PRK00039.2-1"/>
    <property type="match status" value="1"/>
</dbReference>
<dbReference type="NCBIfam" id="TIGR00228">
    <property type="entry name" value="ruvC"/>
    <property type="match status" value="1"/>
</dbReference>
<dbReference type="PANTHER" id="PTHR30194">
    <property type="entry name" value="CROSSOVER JUNCTION ENDODEOXYRIBONUCLEASE RUVC"/>
    <property type="match status" value="1"/>
</dbReference>
<dbReference type="PANTHER" id="PTHR30194:SF3">
    <property type="entry name" value="CROSSOVER JUNCTION ENDODEOXYRIBONUCLEASE RUVC"/>
    <property type="match status" value="1"/>
</dbReference>
<dbReference type="Pfam" id="PF02075">
    <property type="entry name" value="RuvC"/>
    <property type="match status" value="1"/>
</dbReference>
<dbReference type="PRINTS" id="PR00696">
    <property type="entry name" value="RSOLVASERUVC"/>
</dbReference>
<dbReference type="SUPFAM" id="SSF53098">
    <property type="entry name" value="Ribonuclease H-like"/>
    <property type="match status" value="1"/>
</dbReference>
<dbReference type="PROSITE" id="PS01321">
    <property type="entry name" value="RUVC"/>
    <property type="match status" value="1"/>
</dbReference>
<gene>
    <name evidence="1" type="primary">ruvC</name>
    <name type="ordered locus">SNSL254_A2057</name>
</gene>
<sequence>MSIILGIDPGSRITGYGVIRQVGRQLTYLGSGCIRTKVDDLPSRLKLIYAGVTEIITQFQPDYFAIEQVFMAKNADSALKLGQARGVAIVAAVNQELPVFEYAARQVKQTVVGIGSAEKSQVQHMVRTLLKLPANPQADAADALAIAITHCHVSQNAMQMSESRLNLARGRLR</sequence>
<keyword id="KW-0963">Cytoplasm</keyword>
<keyword id="KW-0227">DNA damage</keyword>
<keyword id="KW-0233">DNA recombination</keyword>
<keyword id="KW-0234">DNA repair</keyword>
<keyword id="KW-0238">DNA-binding</keyword>
<keyword id="KW-0255">Endonuclease</keyword>
<keyword id="KW-0378">Hydrolase</keyword>
<keyword id="KW-0460">Magnesium</keyword>
<keyword id="KW-0479">Metal-binding</keyword>
<keyword id="KW-0540">Nuclease</keyword>
<comment type="function">
    <text evidence="1">The RuvA-RuvB-RuvC complex processes Holliday junction (HJ) DNA during genetic recombination and DNA repair. Endonuclease that resolves HJ intermediates. Cleaves cruciform DNA by making single-stranded nicks across the HJ at symmetrical positions within the homologous arms, yielding a 5'-phosphate and a 3'-hydroxyl group; requires a central core of homology in the junction. The consensus cleavage sequence is 5'-(A/T)TT(C/G)-3'. Cleavage occurs on the 3'-side of the TT dinucleotide at the point of strand exchange. HJ branch migration catalyzed by RuvA-RuvB allows RuvC to scan DNA until it finds its consensus sequence, where it cleaves and resolves the cruciform DNA.</text>
</comment>
<comment type="catalytic activity">
    <reaction evidence="1">
        <text>Endonucleolytic cleavage at a junction such as a reciprocal single-stranded crossover between two homologous DNA duplexes (Holliday junction).</text>
        <dbReference type="EC" id="3.1.21.10"/>
    </reaction>
</comment>
<comment type="cofactor">
    <cofactor evidence="1">
        <name>Mg(2+)</name>
        <dbReference type="ChEBI" id="CHEBI:18420"/>
    </cofactor>
    <text evidence="1">Binds 2 Mg(2+) ion per subunit.</text>
</comment>
<comment type="subunit">
    <text evidence="1">Homodimer which binds Holliday junction (HJ) DNA. The HJ becomes 2-fold symmetrical on binding to RuvC with unstacked arms; it has a different conformation from HJ DNA in complex with RuvA. In the full resolvosome a probable DNA-RuvA(4)-RuvB(12)-RuvC(2) complex forms which resolves the HJ.</text>
</comment>
<comment type="subcellular location">
    <subcellularLocation>
        <location evidence="1">Cytoplasm</location>
    </subcellularLocation>
</comment>
<comment type="similarity">
    <text evidence="1">Belongs to the RuvC family.</text>
</comment>
<evidence type="ECO:0000255" key="1">
    <source>
        <dbReference type="HAMAP-Rule" id="MF_00034"/>
    </source>
</evidence>
<accession>B4SVE8</accession>
<proteinExistence type="inferred from homology"/>